<proteinExistence type="inferred from homology"/>
<sequence>MEHFDVAIIGLGPAGSALARKLAGKMQVIALDKKHQCGTEGFSKPCGGLLAPDAQRSFIRDGLTLPVDVIANPQIFSVKTVDVAASLTRNYQRSYININRHAFDLWMKSLIPASVEVYHDSLCRKIWREDDKWHVIFRADGWEQHITARYLVGADGANSMVRRHLYPDHQIRKYVAIQQWFAEKHPVPFYSCIFDNAITDCYSWSISKDGYFIFGGAYPMKDGQTRFTTLKEKMSAFQFQFGKAVKSEKCTVLFPSRWQDFVCGKDNAFLIGEAAGFISASSLEGISYALDSAEILRAVFLKQPEKSNAAYWRATHKLRLKLFGKIVKSRCLTAPALRKWIMRSGMAHIPQLKDYPTRFTSPTSRM</sequence>
<feature type="chain" id="PRO_0000320288" description="Protein CbrA">
    <location>
        <begin position="1"/>
        <end position="366"/>
    </location>
</feature>
<evidence type="ECO:0000305" key="1"/>
<reference key="1">
    <citation type="journal article" date="2006" name="BMC Genomics">
        <title>Complete genome sequence of Shigella flexneri 5b and comparison with Shigella flexneri 2a.</title>
        <authorList>
            <person name="Nie H."/>
            <person name="Yang F."/>
            <person name="Zhang X."/>
            <person name="Yang J."/>
            <person name="Chen L."/>
            <person name="Wang J."/>
            <person name="Xiong Z."/>
            <person name="Peng J."/>
            <person name="Sun L."/>
            <person name="Dong J."/>
            <person name="Xue Y."/>
            <person name="Xu X."/>
            <person name="Chen S."/>
            <person name="Yao Z."/>
            <person name="Shen Y."/>
            <person name="Jin Q."/>
        </authorList>
    </citation>
    <scope>NUCLEOTIDE SEQUENCE [LARGE SCALE GENOMIC DNA]</scope>
    <source>
        <strain>8401</strain>
    </source>
</reference>
<comment type="similarity">
    <text evidence="1">Belongs to the CbrA family.</text>
</comment>
<gene>
    <name type="primary">cbrA</name>
    <name type="ordered locus">SFV_3821</name>
</gene>
<organism>
    <name type="scientific">Shigella flexneri serotype 5b (strain 8401)</name>
    <dbReference type="NCBI Taxonomy" id="373384"/>
    <lineage>
        <taxon>Bacteria</taxon>
        <taxon>Pseudomonadati</taxon>
        <taxon>Pseudomonadota</taxon>
        <taxon>Gammaproteobacteria</taxon>
        <taxon>Enterobacterales</taxon>
        <taxon>Enterobacteriaceae</taxon>
        <taxon>Shigella</taxon>
    </lineage>
</organism>
<protein>
    <recommendedName>
        <fullName>Protein CbrA</fullName>
    </recommendedName>
</protein>
<dbReference type="EMBL" id="CP000266">
    <property type="protein sequence ID" value="ABF05832.1"/>
    <property type="molecule type" value="Genomic_DNA"/>
</dbReference>
<dbReference type="RefSeq" id="WP_005106049.1">
    <property type="nucleotide sequence ID" value="NC_008258.1"/>
</dbReference>
<dbReference type="SMR" id="Q0SYN3"/>
<dbReference type="KEGG" id="sfv:SFV_3821"/>
<dbReference type="HOGENOM" id="CLU_024648_1_0_6"/>
<dbReference type="Proteomes" id="UP000000659">
    <property type="component" value="Chromosome"/>
</dbReference>
<dbReference type="GO" id="GO:0071949">
    <property type="term" value="F:FAD binding"/>
    <property type="evidence" value="ECO:0007669"/>
    <property type="project" value="InterPro"/>
</dbReference>
<dbReference type="FunFam" id="3.50.50.60:FF:000151">
    <property type="entry name" value="Protein CbrA"/>
    <property type="match status" value="1"/>
</dbReference>
<dbReference type="Gene3D" id="3.50.50.60">
    <property type="entry name" value="FAD/NAD(P)-binding domain"/>
    <property type="match status" value="1"/>
</dbReference>
<dbReference type="InterPro" id="IPR002938">
    <property type="entry name" value="FAD-bd"/>
</dbReference>
<dbReference type="InterPro" id="IPR036188">
    <property type="entry name" value="FAD/NAD-bd_sf"/>
</dbReference>
<dbReference type="InterPro" id="IPR050407">
    <property type="entry name" value="Geranylgeranyl_reductase"/>
</dbReference>
<dbReference type="NCBIfam" id="NF008519">
    <property type="entry name" value="PRK11445.1"/>
    <property type="match status" value="1"/>
</dbReference>
<dbReference type="PANTHER" id="PTHR42685:SF22">
    <property type="entry name" value="CONDITIONED MEDIUM FACTOR RECEPTOR 1"/>
    <property type="match status" value="1"/>
</dbReference>
<dbReference type="PANTHER" id="PTHR42685">
    <property type="entry name" value="GERANYLGERANYL DIPHOSPHATE REDUCTASE"/>
    <property type="match status" value="1"/>
</dbReference>
<dbReference type="Pfam" id="PF01494">
    <property type="entry name" value="FAD_binding_3"/>
    <property type="match status" value="1"/>
</dbReference>
<dbReference type="PRINTS" id="PR00420">
    <property type="entry name" value="RNGMNOXGNASE"/>
</dbReference>
<dbReference type="SUPFAM" id="SSF51905">
    <property type="entry name" value="FAD/NAD(P)-binding domain"/>
    <property type="match status" value="1"/>
</dbReference>
<accession>Q0SYN3</accession>
<name>CBRA_SHIF8</name>